<accession>Q2LVW6</accession>
<organism>
    <name type="scientific">Syntrophus aciditrophicus (strain SB)</name>
    <dbReference type="NCBI Taxonomy" id="56780"/>
    <lineage>
        <taxon>Bacteria</taxon>
        <taxon>Pseudomonadati</taxon>
        <taxon>Thermodesulfobacteriota</taxon>
        <taxon>Syntrophia</taxon>
        <taxon>Syntrophales</taxon>
        <taxon>Syntrophaceae</taxon>
        <taxon>Syntrophus</taxon>
    </lineage>
</organism>
<proteinExistence type="inferred from homology"/>
<gene>
    <name evidence="1" type="primary">hemL</name>
    <name type="ordered locus">SYNAS_23480</name>
    <name type="ORF">SYN_00583</name>
</gene>
<evidence type="ECO:0000255" key="1">
    <source>
        <dbReference type="HAMAP-Rule" id="MF_00375"/>
    </source>
</evidence>
<name>GSA_SYNAS</name>
<dbReference type="EC" id="5.4.3.8" evidence="1"/>
<dbReference type="EMBL" id="CP000252">
    <property type="protein sequence ID" value="ABC78227.1"/>
    <property type="molecule type" value="Genomic_DNA"/>
</dbReference>
<dbReference type="RefSeq" id="WP_011418246.1">
    <property type="nucleotide sequence ID" value="NC_007759.1"/>
</dbReference>
<dbReference type="SMR" id="Q2LVW6"/>
<dbReference type="FunCoup" id="Q2LVW6">
    <property type="interactions" value="506"/>
</dbReference>
<dbReference type="STRING" id="56780.SYN_00583"/>
<dbReference type="KEGG" id="sat:SYN_00583"/>
<dbReference type="eggNOG" id="COG0001">
    <property type="taxonomic scope" value="Bacteria"/>
</dbReference>
<dbReference type="HOGENOM" id="CLU_016922_1_5_7"/>
<dbReference type="InParanoid" id="Q2LVW6"/>
<dbReference type="OrthoDB" id="9801052at2"/>
<dbReference type="UniPathway" id="UPA00251">
    <property type="reaction ID" value="UER00317"/>
</dbReference>
<dbReference type="Proteomes" id="UP000001933">
    <property type="component" value="Chromosome"/>
</dbReference>
<dbReference type="GO" id="GO:0005737">
    <property type="term" value="C:cytoplasm"/>
    <property type="evidence" value="ECO:0007669"/>
    <property type="project" value="UniProtKB-SubCell"/>
</dbReference>
<dbReference type="GO" id="GO:0042286">
    <property type="term" value="F:glutamate-1-semialdehyde 2,1-aminomutase activity"/>
    <property type="evidence" value="ECO:0007669"/>
    <property type="project" value="UniProtKB-UniRule"/>
</dbReference>
<dbReference type="GO" id="GO:0030170">
    <property type="term" value="F:pyridoxal phosphate binding"/>
    <property type="evidence" value="ECO:0007669"/>
    <property type="project" value="InterPro"/>
</dbReference>
<dbReference type="GO" id="GO:0008483">
    <property type="term" value="F:transaminase activity"/>
    <property type="evidence" value="ECO:0007669"/>
    <property type="project" value="InterPro"/>
</dbReference>
<dbReference type="GO" id="GO:0006782">
    <property type="term" value="P:protoporphyrinogen IX biosynthetic process"/>
    <property type="evidence" value="ECO:0007669"/>
    <property type="project" value="UniProtKB-UniRule"/>
</dbReference>
<dbReference type="CDD" id="cd00610">
    <property type="entry name" value="OAT_like"/>
    <property type="match status" value="1"/>
</dbReference>
<dbReference type="FunFam" id="3.40.640.10:FF:000021">
    <property type="entry name" value="Glutamate-1-semialdehyde 2,1-aminomutase"/>
    <property type="match status" value="1"/>
</dbReference>
<dbReference type="Gene3D" id="3.90.1150.10">
    <property type="entry name" value="Aspartate Aminotransferase, domain 1"/>
    <property type="match status" value="1"/>
</dbReference>
<dbReference type="Gene3D" id="3.40.640.10">
    <property type="entry name" value="Type I PLP-dependent aspartate aminotransferase-like (Major domain)"/>
    <property type="match status" value="1"/>
</dbReference>
<dbReference type="HAMAP" id="MF_00375">
    <property type="entry name" value="HemL_aminotrans_3"/>
    <property type="match status" value="1"/>
</dbReference>
<dbReference type="InterPro" id="IPR004639">
    <property type="entry name" value="4pyrrol_synth_GluAld_NH2Trfase"/>
</dbReference>
<dbReference type="InterPro" id="IPR005814">
    <property type="entry name" value="Aminotrans_3"/>
</dbReference>
<dbReference type="InterPro" id="IPR049704">
    <property type="entry name" value="Aminotrans_3_PPA_site"/>
</dbReference>
<dbReference type="InterPro" id="IPR015424">
    <property type="entry name" value="PyrdxlP-dep_Trfase"/>
</dbReference>
<dbReference type="InterPro" id="IPR015421">
    <property type="entry name" value="PyrdxlP-dep_Trfase_major"/>
</dbReference>
<dbReference type="InterPro" id="IPR015422">
    <property type="entry name" value="PyrdxlP-dep_Trfase_small"/>
</dbReference>
<dbReference type="NCBIfam" id="TIGR00713">
    <property type="entry name" value="hemL"/>
    <property type="match status" value="1"/>
</dbReference>
<dbReference type="NCBIfam" id="NF000818">
    <property type="entry name" value="PRK00062.1"/>
    <property type="match status" value="1"/>
</dbReference>
<dbReference type="PANTHER" id="PTHR43713">
    <property type="entry name" value="GLUTAMATE-1-SEMIALDEHYDE 2,1-AMINOMUTASE"/>
    <property type="match status" value="1"/>
</dbReference>
<dbReference type="PANTHER" id="PTHR43713:SF3">
    <property type="entry name" value="GLUTAMATE-1-SEMIALDEHYDE 2,1-AMINOMUTASE 1, CHLOROPLASTIC-RELATED"/>
    <property type="match status" value="1"/>
</dbReference>
<dbReference type="Pfam" id="PF00202">
    <property type="entry name" value="Aminotran_3"/>
    <property type="match status" value="1"/>
</dbReference>
<dbReference type="SUPFAM" id="SSF53383">
    <property type="entry name" value="PLP-dependent transferases"/>
    <property type="match status" value="1"/>
</dbReference>
<dbReference type="PROSITE" id="PS00600">
    <property type="entry name" value="AA_TRANSFER_CLASS_3"/>
    <property type="match status" value="1"/>
</dbReference>
<keyword id="KW-0963">Cytoplasm</keyword>
<keyword id="KW-0413">Isomerase</keyword>
<keyword id="KW-0627">Porphyrin biosynthesis</keyword>
<keyword id="KW-0663">Pyridoxal phosphate</keyword>
<keyword id="KW-1185">Reference proteome</keyword>
<protein>
    <recommendedName>
        <fullName evidence="1">Glutamate-1-semialdehyde 2,1-aminomutase</fullName>
        <shortName evidence="1">GSA</shortName>
        <ecNumber evidence="1">5.4.3.8</ecNumber>
    </recommendedName>
    <alternativeName>
        <fullName evidence="1">Glutamate-1-semialdehyde aminotransferase</fullName>
        <shortName evidence="1">GSA-AT</shortName>
    </alternativeName>
</protein>
<feature type="chain" id="PRO_0000243633" description="Glutamate-1-semialdehyde 2,1-aminomutase">
    <location>
        <begin position="1"/>
        <end position="432"/>
    </location>
</feature>
<feature type="modified residue" description="N6-(pyridoxal phosphate)lysine" evidence="1">
    <location>
        <position position="267"/>
    </location>
</feature>
<comment type="catalytic activity">
    <reaction evidence="1">
        <text>(S)-4-amino-5-oxopentanoate = 5-aminolevulinate</text>
        <dbReference type="Rhea" id="RHEA:14265"/>
        <dbReference type="ChEBI" id="CHEBI:57501"/>
        <dbReference type="ChEBI" id="CHEBI:356416"/>
        <dbReference type="EC" id="5.4.3.8"/>
    </reaction>
</comment>
<comment type="cofactor">
    <cofactor evidence="1">
        <name>pyridoxal 5'-phosphate</name>
        <dbReference type="ChEBI" id="CHEBI:597326"/>
    </cofactor>
</comment>
<comment type="pathway">
    <text evidence="1">Porphyrin-containing compound metabolism; protoporphyrin-IX biosynthesis; 5-aminolevulinate from L-glutamyl-tRNA(Glu): step 2/2.</text>
</comment>
<comment type="subunit">
    <text evidence="1">Homodimer.</text>
</comment>
<comment type="subcellular location">
    <subcellularLocation>
        <location evidence="1">Cytoplasm</location>
    </subcellularLocation>
</comment>
<comment type="similarity">
    <text evidence="1">Belongs to the class-III pyridoxal-phosphate-dependent aminotransferase family. HemL subfamily.</text>
</comment>
<sequence length="432" mass="46456">MTKSLSEQLFETAEGLLPGGVNSPVRAFRAVGGVPRFIDRAEGSRIYDIDGREYIDYVGSWGPMILGHSHPQVVEAIRKAVERGTSYGAPTPGEIALARTIIEAFPSMEMIRMVSSGTEAVMSAIRLARGFTGRDKILKFEGCYHGHGDSLLVKAGSGVATLGIPGSPGVPACLAELTITVPFNSNEAFRKAVDRHGKELACVIVEPVAANMGVVNPRPGFLETLRELTRKAGIVLIFDEVITGFRLAYGGFQKLCRLEPDLTCLGKIIGGGLPVGAFGGKRTIMDFLAPNGPVYQAGTLSGNPLAMSAGLATLETLRSRRDDYAALDRRTADLCAAMGKLFRTAELPVRINRAGSLFTVFFTDSDVFDYETASHCNLERYARFFKGMLDRGVYLAPSAFEAAFVSFAHSDEDLEKTLQACAETIKTLGGNP</sequence>
<reference key="1">
    <citation type="journal article" date="2007" name="Proc. Natl. Acad. Sci. U.S.A.">
        <title>The genome of Syntrophus aciditrophicus: life at the thermodynamic limit of microbial growth.</title>
        <authorList>
            <person name="McInerney M.J."/>
            <person name="Rohlin L."/>
            <person name="Mouttaki H."/>
            <person name="Kim U."/>
            <person name="Krupp R.S."/>
            <person name="Rios-Hernandez L."/>
            <person name="Sieber J."/>
            <person name="Struchtemeyer C.G."/>
            <person name="Bhattacharyya A."/>
            <person name="Campbell J.W."/>
            <person name="Gunsalus R.P."/>
        </authorList>
    </citation>
    <scope>NUCLEOTIDE SEQUENCE [LARGE SCALE GENOMIC DNA]</scope>
    <source>
        <strain>SB</strain>
    </source>
</reference>